<keyword id="KW-0067">ATP-binding</keyword>
<keyword id="KW-0963">Cytoplasm</keyword>
<keyword id="KW-0418">Kinase</keyword>
<keyword id="KW-0547">Nucleotide-binding</keyword>
<keyword id="KW-1185">Reference proteome</keyword>
<keyword id="KW-0808">Transferase</keyword>
<proteinExistence type="inferred from homology"/>
<accession>Q82ZD5</accession>
<dbReference type="EC" id="2.7.4.8" evidence="1"/>
<dbReference type="EMBL" id="AE016830">
    <property type="protein sequence ID" value="AAO82806.1"/>
    <property type="molecule type" value="Genomic_DNA"/>
</dbReference>
<dbReference type="RefSeq" id="NP_816736.1">
    <property type="nucleotide sequence ID" value="NC_004668.1"/>
</dbReference>
<dbReference type="RefSeq" id="WP_002354915.1">
    <property type="nucleotide sequence ID" value="NZ_KE136524.1"/>
</dbReference>
<dbReference type="SMR" id="Q82ZD5"/>
<dbReference type="STRING" id="226185.EF_3127"/>
<dbReference type="EnsemblBacteria" id="AAO82806">
    <property type="protein sequence ID" value="AAO82806"/>
    <property type="gene ID" value="EF_3127"/>
</dbReference>
<dbReference type="GeneID" id="60892374"/>
<dbReference type="KEGG" id="efa:EF3127"/>
<dbReference type="PATRIC" id="fig|226185.45.peg.446"/>
<dbReference type="eggNOG" id="COG0194">
    <property type="taxonomic scope" value="Bacteria"/>
</dbReference>
<dbReference type="HOGENOM" id="CLU_001715_1_0_9"/>
<dbReference type="Proteomes" id="UP000001415">
    <property type="component" value="Chromosome"/>
</dbReference>
<dbReference type="GO" id="GO:0005829">
    <property type="term" value="C:cytosol"/>
    <property type="evidence" value="ECO:0007669"/>
    <property type="project" value="TreeGrafter"/>
</dbReference>
<dbReference type="GO" id="GO:0005524">
    <property type="term" value="F:ATP binding"/>
    <property type="evidence" value="ECO:0007669"/>
    <property type="project" value="UniProtKB-UniRule"/>
</dbReference>
<dbReference type="GO" id="GO:0004385">
    <property type="term" value="F:guanylate kinase activity"/>
    <property type="evidence" value="ECO:0007669"/>
    <property type="project" value="UniProtKB-UniRule"/>
</dbReference>
<dbReference type="CDD" id="cd00071">
    <property type="entry name" value="GMPK"/>
    <property type="match status" value="1"/>
</dbReference>
<dbReference type="FunFam" id="3.40.50.300:FF:000855">
    <property type="entry name" value="Guanylate kinase"/>
    <property type="match status" value="1"/>
</dbReference>
<dbReference type="FunFam" id="3.30.63.10:FF:000002">
    <property type="entry name" value="Guanylate kinase 1"/>
    <property type="match status" value="1"/>
</dbReference>
<dbReference type="Gene3D" id="3.30.63.10">
    <property type="entry name" value="Guanylate Kinase phosphate binding domain"/>
    <property type="match status" value="1"/>
</dbReference>
<dbReference type="Gene3D" id="3.40.50.300">
    <property type="entry name" value="P-loop containing nucleotide triphosphate hydrolases"/>
    <property type="match status" value="1"/>
</dbReference>
<dbReference type="HAMAP" id="MF_00328">
    <property type="entry name" value="Guanylate_kinase"/>
    <property type="match status" value="1"/>
</dbReference>
<dbReference type="InterPro" id="IPR008145">
    <property type="entry name" value="GK/Ca_channel_bsu"/>
</dbReference>
<dbReference type="InterPro" id="IPR008144">
    <property type="entry name" value="Guanylate_kin-like_dom"/>
</dbReference>
<dbReference type="InterPro" id="IPR017665">
    <property type="entry name" value="Guanylate_kinase"/>
</dbReference>
<dbReference type="InterPro" id="IPR020590">
    <property type="entry name" value="Guanylate_kinase_CS"/>
</dbReference>
<dbReference type="InterPro" id="IPR027417">
    <property type="entry name" value="P-loop_NTPase"/>
</dbReference>
<dbReference type="NCBIfam" id="TIGR03263">
    <property type="entry name" value="guanyl_kin"/>
    <property type="match status" value="1"/>
</dbReference>
<dbReference type="PANTHER" id="PTHR23117:SF13">
    <property type="entry name" value="GUANYLATE KINASE"/>
    <property type="match status" value="1"/>
</dbReference>
<dbReference type="PANTHER" id="PTHR23117">
    <property type="entry name" value="GUANYLATE KINASE-RELATED"/>
    <property type="match status" value="1"/>
</dbReference>
<dbReference type="Pfam" id="PF00625">
    <property type="entry name" value="Guanylate_kin"/>
    <property type="match status" value="1"/>
</dbReference>
<dbReference type="SMART" id="SM00072">
    <property type="entry name" value="GuKc"/>
    <property type="match status" value="1"/>
</dbReference>
<dbReference type="SUPFAM" id="SSF52540">
    <property type="entry name" value="P-loop containing nucleoside triphosphate hydrolases"/>
    <property type="match status" value="1"/>
</dbReference>
<dbReference type="PROSITE" id="PS00856">
    <property type="entry name" value="GUANYLATE_KINASE_1"/>
    <property type="match status" value="1"/>
</dbReference>
<dbReference type="PROSITE" id="PS50052">
    <property type="entry name" value="GUANYLATE_KINASE_2"/>
    <property type="match status" value="1"/>
</dbReference>
<name>KGUA_ENTFA</name>
<gene>
    <name evidence="1" type="primary">gmk</name>
    <name type="ordered locus">EF_3127</name>
</gene>
<protein>
    <recommendedName>
        <fullName evidence="1">Guanylate kinase</fullName>
        <ecNumber evidence="1">2.7.4.8</ecNumber>
    </recommendedName>
    <alternativeName>
        <fullName evidence="1">GMP kinase</fullName>
    </alternativeName>
</protein>
<comment type="function">
    <text evidence="1">Essential for recycling GMP and indirectly, cGMP.</text>
</comment>
<comment type="catalytic activity">
    <reaction evidence="1">
        <text>GMP + ATP = GDP + ADP</text>
        <dbReference type="Rhea" id="RHEA:20780"/>
        <dbReference type="ChEBI" id="CHEBI:30616"/>
        <dbReference type="ChEBI" id="CHEBI:58115"/>
        <dbReference type="ChEBI" id="CHEBI:58189"/>
        <dbReference type="ChEBI" id="CHEBI:456216"/>
        <dbReference type="EC" id="2.7.4.8"/>
    </reaction>
</comment>
<comment type="subcellular location">
    <subcellularLocation>
        <location evidence="1">Cytoplasm</location>
    </subcellularLocation>
</comment>
<comment type="similarity">
    <text evidence="1">Belongs to the guanylate kinase family.</text>
</comment>
<feature type="chain" id="PRO_0000170537" description="Guanylate kinase">
    <location>
        <begin position="1"/>
        <end position="204"/>
    </location>
</feature>
<feature type="domain" description="Guanylate kinase-like" evidence="1">
    <location>
        <begin position="5"/>
        <end position="184"/>
    </location>
</feature>
<feature type="binding site" evidence="1">
    <location>
        <begin position="12"/>
        <end position="19"/>
    </location>
    <ligand>
        <name>ATP</name>
        <dbReference type="ChEBI" id="CHEBI:30616"/>
    </ligand>
</feature>
<organism>
    <name type="scientific">Enterococcus faecalis (strain ATCC 700802 / V583)</name>
    <dbReference type="NCBI Taxonomy" id="226185"/>
    <lineage>
        <taxon>Bacteria</taxon>
        <taxon>Bacillati</taxon>
        <taxon>Bacillota</taxon>
        <taxon>Bacilli</taxon>
        <taxon>Lactobacillales</taxon>
        <taxon>Enterococcaceae</taxon>
        <taxon>Enterococcus</taxon>
    </lineage>
</organism>
<sequence length="204" mass="23252">MSERGLLIVLSGPSGVGKGTVRKAIFDSEENDFQYSISMTTRKQREGEVDGVDYYFRSREEFEAMIEAGEMLEYAEYVGNYYGTPLTYVNQTLDEGKDVFLEIEVQGAKQVKDKVPDGVFIFLTPPDLAELKSRIIGRGTDEMSVIEERMAVAREEIEMMALYDYAVVNDEVPLAVQRIKDIIASEHFRVDRVIGKYIKMLEEM</sequence>
<evidence type="ECO:0000255" key="1">
    <source>
        <dbReference type="HAMAP-Rule" id="MF_00328"/>
    </source>
</evidence>
<reference key="1">
    <citation type="journal article" date="2003" name="Science">
        <title>Role of mobile DNA in the evolution of vancomycin-resistant Enterococcus faecalis.</title>
        <authorList>
            <person name="Paulsen I.T."/>
            <person name="Banerjei L."/>
            <person name="Myers G.S.A."/>
            <person name="Nelson K.E."/>
            <person name="Seshadri R."/>
            <person name="Read T.D."/>
            <person name="Fouts D.E."/>
            <person name="Eisen J.A."/>
            <person name="Gill S.R."/>
            <person name="Heidelberg J.F."/>
            <person name="Tettelin H."/>
            <person name="Dodson R.J."/>
            <person name="Umayam L.A."/>
            <person name="Brinkac L.M."/>
            <person name="Beanan M.J."/>
            <person name="Daugherty S.C."/>
            <person name="DeBoy R.T."/>
            <person name="Durkin S.A."/>
            <person name="Kolonay J.F."/>
            <person name="Madupu R."/>
            <person name="Nelson W.C."/>
            <person name="Vamathevan J.J."/>
            <person name="Tran B."/>
            <person name="Upton J."/>
            <person name="Hansen T."/>
            <person name="Shetty J."/>
            <person name="Khouri H.M."/>
            <person name="Utterback T.R."/>
            <person name="Radune D."/>
            <person name="Ketchum K.A."/>
            <person name="Dougherty B.A."/>
            <person name="Fraser C.M."/>
        </authorList>
    </citation>
    <scope>NUCLEOTIDE SEQUENCE [LARGE SCALE GENOMIC DNA]</scope>
    <source>
        <strain>ATCC 700802 / V583</strain>
    </source>
</reference>